<evidence type="ECO:0000250" key="1"/>
<evidence type="ECO:0000269" key="2">
    <source>
    </source>
</evidence>
<evidence type="ECO:0000305" key="3"/>
<sequence length="532" mass="58417">MSDLLTDELGQAFQITDEDKGCRIKGQQCILANIGVVRSIATFLSTSLGPTGMDKILQSKDEDIVVTNDGATILKEMEMTENPISRLIVQLSESQDEEIGDGTTSVVVLASALLDQAQALLGQGVHPIKISEGFEVGLGHAVEHLSEISEEISDLKETMMKAAKTSLGSKIVYKSLERFAEICTDAVLMVADMERKDLDFELINIESKVGRDLSSTALIKGIVINKEFSHPQMKKEVKDGRIALLSCPFEPPKLKTKHSLVISNPKEYKELEEYEKKKFAEMIESIKRSGSNIVMCQWGFDDEANSLLMENGLPAVRWVGGHELELLAVHTGGSIVARFEDLEESDLGKARVREESLGTENDKIIVVENEGCSKAVTILVRGANDLVIEEAKRSIRDALCAVRNILTNSRIVYGGGSSEMSCSLALERIATGYSGEEREAILGFGRALEEIPLCLARNSGHDPIGYSSDLRKLQMESKNFHLGVDCLGDGEQDMKKLGVFDALSSKIRQFQMATQLVTMVLKIDNVVSDFHD</sequence>
<keyword id="KW-0067">ATP-binding</keyword>
<keyword id="KW-0143">Chaperone</keyword>
<keyword id="KW-0963">Cytoplasm</keyword>
<keyword id="KW-0547">Nucleotide-binding</keyword>
<keyword id="KW-1185">Reference proteome</keyword>
<proteinExistence type="evidence at protein level"/>
<organism>
    <name type="scientific">Encephalitozoon cuniculi (strain GB-M1)</name>
    <name type="common">Microsporidian parasite</name>
    <dbReference type="NCBI Taxonomy" id="284813"/>
    <lineage>
        <taxon>Eukaryota</taxon>
        <taxon>Fungi</taxon>
        <taxon>Fungi incertae sedis</taxon>
        <taxon>Microsporidia</taxon>
        <taxon>Unikaryonidae</taxon>
        <taxon>Encephalitozoon</taxon>
    </lineage>
</organism>
<name>TCPE_ENCCU</name>
<dbReference type="EMBL" id="AL590446">
    <property type="protein sequence ID" value="CAD25459.1"/>
    <property type="molecule type" value="Genomic_DNA"/>
</dbReference>
<dbReference type="RefSeq" id="NP_585855.1">
    <property type="nucleotide sequence ID" value="NM_001041477.1"/>
</dbReference>
<dbReference type="SMR" id="Q8SRP9"/>
<dbReference type="FunCoup" id="Q8SRP9">
    <property type="interactions" value="334"/>
</dbReference>
<dbReference type="STRING" id="284813.Q8SRP9"/>
<dbReference type="GeneID" id="859280"/>
<dbReference type="KEGG" id="ecu:ECU06_0990"/>
<dbReference type="VEuPathDB" id="MicrosporidiaDB:ECU06_0990"/>
<dbReference type="HOGENOM" id="CLU_008891_7_2_1"/>
<dbReference type="InParanoid" id="Q8SRP9"/>
<dbReference type="OMA" id="SHPQMPH"/>
<dbReference type="OrthoDB" id="10248520at2759"/>
<dbReference type="Proteomes" id="UP000000819">
    <property type="component" value="Chromosome VI"/>
</dbReference>
<dbReference type="GO" id="GO:0005832">
    <property type="term" value="C:chaperonin-containing T-complex"/>
    <property type="evidence" value="ECO:0007669"/>
    <property type="project" value="UniProtKB-ARBA"/>
</dbReference>
<dbReference type="GO" id="GO:0005524">
    <property type="term" value="F:ATP binding"/>
    <property type="evidence" value="ECO:0007669"/>
    <property type="project" value="UniProtKB-KW"/>
</dbReference>
<dbReference type="GO" id="GO:0016887">
    <property type="term" value="F:ATP hydrolysis activity"/>
    <property type="evidence" value="ECO:0007669"/>
    <property type="project" value="InterPro"/>
</dbReference>
<dbReference type="GO" id="GO:0140662">
    <property type="term" value="F:ATP-dependent protein folding chaperone"/>
    <property type="evidence" value="ECO:0007669"/>
    <property type="project" value="InterPro"/>
</dbReference>
<dbReference type="GO" id="GO:0051082">
    <property type="term" value="F:unfolded protein binding"/>
    <property type="evidence" value="ECO:0007669"/>
    <property type="project" value="InterPro"/>
</dbReference>
<dbReference type="Gene3D" id="3.50.7.10">
    <property type="entry name" value="GroEL"/>
    <property type="match status" value="1"/>
</dbReference>
<dbReference type="Gene3D" id="1.10.560.10">
    <property type="entry name" value="GroEL-like equatorial domain"/>
    <property type="match status" value="1"/>
</dbReference>
<dbReference type="Gene3D" id="3.30.260.10">
    <property type="entry name" value="TCP-1-like chaperonin intermediate domain"/>
    <property type="match status" value="1"/>
</dbReference>
<dbReference type="InterPro" id="IPR012718">
    <property type="entry name" value="Chap_CCT_epsi"/>
</dbReference>
<dbReference type="InterPro" id="IPR017998">
    <property type="entry name" value="Chaperone_TCP-1"/>
</dbReference>
<dbReference type="InterPro" id="IPR002194">
    <property type="entry name" value="Chaperonin_TCP-1_CS"/>
</dbReference>
<dbReference type="InterPro" id="IPR002423">
    <property type="entry name" value="Cpn60/GroEL/TCP-1"/>
</dbReference>
<dbReference type="InterPro" id="IPR027409">
    <property type="entry name" value="GroEL-like_apical_dom_sf"/>
</dbReference>
<dbReference type="InterPro" id="IPR027413">
    <property type="entry name" value="GROEL-like_equatorial_sf"/>
</dbReference>
<dbReference type="InterPro" id="IPR027410">
    <property type="entry name" value="TCP-1-like_intermed_sf"/>
</dbReference>
<dbReference type="InterPro" id="IPR053374">
    <property type="entry name" value="TCP-1_chaperonin"/>
</dbReference>
<dbReference type="NCBIfam" id="TIGR02343">
    <property type="entry name" value="chap_CCT_epsi"/>
    <property type="match status" value="1"/>
</dbReference>
<dbReference type="NCBIfam" id="NF041083">
    <property type="entry name" value="thermosome_beta"/>
    <property type="match status" value="1"/>
</dbReference>
<dbReference type="PANTHER" id="PTHR11353">
    <property type="entry name" value="CHAPERONIN"/>
    <property type="match status" value="1"/>
</dbReference>
<dbReference type="Pfam" id="PF00118">
    <property type="entry name" value="Cpn60_TCP1"/>
    <property type="match status" value="1"/>
</dbReference>
<dbReference type="PRINTS" id="PR00304">
    <property type="entry name" value="TCOMPLEXTCP1"/>
</dbReference>
<dbReference type="SUPFAM" id="SSF52029">
    <property type="entry name" value="GroEL apical domain-like"/>
    <property type="match status" value="1"/>
</dbReference>
<dbReference type="SUPFAM" id="SSF48592">
    <property type="entry name" value="GroEL equatorial domain-like"/>
    <property type="match status" value="1"/>
</dbReference>
<dbReference type="SUPFAM" id="SSF54849">
    <property type="entry name" value="GroEL-intermediate domain like"/>
    <property type="match status" value="1"/>
</dbReference>
<dbReference type="PROSITE" id="PS00995">
    <property type="entry name" value="TCP1_3"/>
    <property type="match status" value="1"/>
</dbReference>
<protein>
    <recommendedName>
        <fullName>T-complex protein 1 subunit epsilon</fullName>
        <shortName>TCP-1-epsilon</shortName>
    </recommendedName>
    <alternativeName>
        <fullName>CCT-epsilon</fullName>
    </alternativeName>
</protein>
<gene>
    <name type="primary">CCT5</name>
    <name type="ordered locus">ECU06_0990</name>
</gene>
<comment type="function">
    <text evidence="1">Molecular chaperone; assists the folding of proteins upon ATP hydrolysis.</text>
</comment>
<comment type="subunit">
    <text evidence="1">Component of the T-complex protein 1 (TCP1) complex.</text>
</comment>
<comment type="subcellular location">
    <subcellularLocation>
        <location evidence="1">Cytoplasm</location>
    </subcellularLocation>
</comment>
<comment type="developmental stage">
    <text evidence="2">Expressed in late sporogonial stages.</text>
</comment>
<comment type="similarity">
    <text evidence="3">Belongs to the TCP-1 chaperonin family.</text>
</comment>
<feature type="chain" id="PRO_0000378557" description="T-complex protein 1 subunit epsilon">
    <location>
        <begin position="1"/>
        <end position="532"/>
    </location>
</feature>
<accession>Q8SRP9</accession>
<reference key="1">
    <citation type="journal article" date="2001" name="Nature">
        <title>Genome sequence and gene compaction of the eukaryote parasite Encephalitozoon cuniculi.</title>
        <authorList>
            <person name="Katinka M.D."/>
            <person name="Duprat S."/>
            <person name="Cornillot E."/>
            <person name="Metenier G."/>
            <person name="Thomarat F."/>
            <person name="Prensier G."/>
            <person name="Barbe V."/>
            <person name="Peyretaillade E."/>
            <person name="Brottier P."/>
            <person name="Wincker P."/>
            <person name="Delbac F."/>
            <person name="El Alaoui H."/>
            <person name="Peyret P."/>
            <person name="Saurin W."/>
            <person name="Gouy M."/>
            <person name="Weissenbach J."/>
            <person name="Vivares C.P."/>
        </authorList>
    </citation>
    <scope>NUCLEOTIDE SEQUENCE [LARGE SCALE GENOMIC DNA]</scope>
    <source>
        <strain>GB-M1</strain>
    </source>
</reference>
<reference key="2">
    <citation type="journal article" date="2006" name="Proteomics">
        <title>Proteomic analysis of the eukaryotic parasite Encephalitozoon cuniculi (microsporidia): a reference map for proteins expressed in late sporogonial stages.</title>
        <authorList>
            <person name="Brosson D."/>
            <person name="Kuhn L."/>
            <person name="Delbac F."/>
            <person name="Garin J."/>
            <person name="Vivares C.P."/>
            <person name="Texier C."/>
        </authorList>
    </citation>
    <scope>IDENTIFICATION BY MASS SPECTROMETRY [LARGE SCALE ANALYSIS]</scope>
    <scope>DEVELOPMENTAL STAGE</scope>
</reference>